<comment type="function">
    <text evidence="4 7">Cytochrome P450 monooxygenase; part of the PUL gene cluster that mediates the formation of pulcherrimin, a red iron-containing pigment composed of two cyclized and modified leucine molecules that acts as a siderophore, a chelator that binds iron outside the cell for subsequent uptake (PubMed:30297402). Two leucine molecules are cyclized via a cyclodipeptide synthase, and the resulting diketopiperazine is oxidized by a cytochrome P450 monooxygenase to generate pulcherriminic acid (PA), which can then spontaneously bind iron to form pulcherrimin (PubMed:30297402). The probable cyclodipeptide synthase PUL1 and the cytochrome P450 monooxygenase PUL2 encode the enzymes responsible for the two-step pulcherrimin biosynthesis pathway (Probable).</text>
</comment>
<comment type="cofactor">
    <cofactor evidence="1">
        <name>heme</name>
        <dbReference type="ChEBI" id="CHEBI:30413"/>
    </cofactor>
</comment>
<comment type="pathway">
    <text evidence="4">Siderophore biosynthesis.</text>
</comment>
<comment type="subcellular location">
    <subcellularLocation>
        <location evidence="2">Membrane</location>
        <topology evidence="2">Single-pass membrane protein</topology>
    </subcellularLocation>
</comment>
<comment type="disruption phenotype">
    <text evidence="4">Impairs pulcherrimin production and subsequent red pigmentation.</text>
</comment>
<comment type="similarity">
    <text evidence="6">Belongs to the cytochrome P450 family.</text>
</comment>
<evidence type="ECO:0000250" key="1">
    <source>
        <dbReference type="UniProtKB" id="P04798"/>
    </source>
</evidence>
<evidence type="ECO:0000255" key="2"/>
<evidence type="ECO:0000255" key="3">
    <source>
        <dbReference type="PROSITE-ProRule" id="PRU00498"/>
    </source>
</evidence>
<evidence type="ECO:0000269" key="4">
    <source>
    </source>
</evidence>
<evidence type="ECO:0000303" key="5">
    <source>
    </source>
</evidence>
<evidence type="ECO:0000305" key="6"/>
<evidence type="ECO:0000305" key="7">
    <source>
    </source>
</evidence>
<dbReference type="EC" id="1.-.-.-" evidence="7"/>
<dbReference type="EMBL" id="CR382123">
    <property type="protein sequence ID" value="CAH01908.1"/>
    <property type="molecule type" value="Genomic_DNA"/>
</dbReference>
<dbReference type="RefSeq" id="XP_453057.1">
    <property type="nucleotide sequence ID" value="XM_453057.1"/>
</dbReference>
<dbReference type="SMR" id="Q6CSN2"/>
<dbReference type="STRING" id="284590.Q6CSN2"/>
<dbReference type="GlyCosmos" id="Q6CSN2">
    <property type="glycosylation" value="3 sites, No reported glycans"/>
</dbReference>
<dbReference type="PaxDb" id="284590-Q6CSN2"/>
<dbReference type="GeneID" id="2892619"/>
<dbReference type="KEGG" id="kla:KLLA0_C19206g"/>
<dbReference type="eggNOG" id="KOG0158">
    <property type="taxonomic scope" value="Eukaryota"/>
</dbReference>
<dbReference type="HOGENOM" id="CLU_042557_0_0_1"/>
<dbReference type="InParanoid" id="Q6CSN2"/>
<dbReference type="OMA" id="IRISPNT"/>
<dbReference type="Proteomes" id="UP000000598">
    <property type="component" value="Chromosome C"/>
</dbReference>
<dbReference type="GO" id="GO:0016020">
    <property type="term" value="C:membrane"/>
    <property type="evidence" value="ECO:0007669"/>
    <property type="project" value="UniProtKB-SubCell"/>
</dbReference>
<dbReference type="GO" id="GO:0020037">
    <property type="term" value="F:heme binding"/>
    <property type="evidence" value="ECO:0007669"/>
    <property type="project" value="InterPro"/>
</dbReference>
<dbReference type="GO" id="GO:0005506">
    <property type="term" value="F:iron ion binding"/>
    <property type="evidence" value="ECO:0007669"/>
    <property type="project" value="InterPro"/>
</dbReference>
<dbReference type="GO" id="GO:0004497">
    <property type="term" value="F:monooxygenase activity"/>
    <property type="evidence" value="ECO:0007669"/>
    <property type="project" value="UniProtKB-KW"/>
</dbReference>
<dbReference type="GO" id="GO:0016705">
    <property type="term" value="F:oxidoreductase activity, acting on paired donors, with incorporation or reduction of molecular oxygen"/>
    <property type="evidence" value="ECO:0007669"/>
    <property type="project" value="InterPro"/>
</dbReference>
<dbReference type="GO" id="GO:0044550">
    <property type="term" value="P:secondary metabolite biosynthetic process"/>
    <property type="evidence" value="ECO:0007669"/>
    <property type="project" value="UniProtKB-ARBA"/>
</dbReference>
<dbReference type="CDD" id="cd20615">
    <property type="entry name" value="CYP_GliC-like"/>
    <property type="match status" value="1"/>
</dbReference>
<dbReference type="Gene3D" id="1.10.630.10">
    <property type="entry name" value="Cytochrome P450"/>
    <property type="match status" value="1"/>
</dbReference>
<dbReference type="InterPro" id="IPR001128">
    <property type="entry name" value="Cyt_P450"/>
</dbReference>
<dbReference type="InterPro" id="IPR017972">
    <property type="entry name" value="Cyt_P450_CS"/>
</dbReference>
<dbReference type="InterPro" id="IPR002401">
    <property type="entry name" value="Cyt_P450_E_grp-I"/>
</dbReference>
<dbReference type="InterPro" id="IPR036396">
    <property type="entry name" value="Cyt_P450_sf"/>
</dbReference>
<dbReference type="InterPro" id="IPR050121">
    <property type="entry name" value="Cytochrome_P450_monoxygenase"/>
</dbReference>
<dbReference type="PANTHER" id="PTHR24305">
    <property type="entry name" value="CYTOCHROME P450"/>
    <property type="match status" value="1"/>
</dbReference>
<dbReference type="PANTHER" id="PTHR24305:SF235">
    <property type="entry name" value="CYTOCHROME P450 MONOOXYGENASE APDB-RELATED"/>
    <property type="match status" value="1"/>
</dbReference>
<dbReference type="Pfam" id="PF00067">
    <property type="entry name" value="p450"/>
    <property type="match status" value="1"/>
</dbReference>
<dbReference type="PRINTS" id="PR00463">
    <property type="entry name" value="EP450I"/>
</dbReference>
<dbReference type="PRINTS" id="PR00385">
    <property type="entry name" value="P450"/>
</dbReference>
<dbReference type="SUPFAM" id="SSF48264">
    <property type="entry name" value="Cytochrome P450"/>
    <property type="match status" value="1"/>
</dbReference>
<dbReference type="PROSITE" id="PS00086">
    <property type="entry name" value="CYTOCHROME_P450"/>
    <property type="match status" value="1"/>
</dbReference>
<feature type="chain" id="PRO_0000445897" description="Cytochrome P450 monooxygenase PUL2">
    <location>
        <begin position="1"/>
        <end position="511"/>
    </location>
</feature>
<feature type="transmembrane region" description="Helical" evidence="2">
    <location>
        <begin position="14"/>
        <end position="34"/>
    </location>
</feature>
<feature type="binding site" description="axial binding residue" evidence="1">
    <location>
        <position position="462"/>
    </location>
    <ligand>
        <name>heme</name>
        <dbReference type="ChEBI" id="CHEBI:30413"/>
    </ligand>
    <ligandPart>
        <name>Fe</name>
        <dbReference type="ChEBI" id="CHEBI:18248"/>
    </ligandPart>
</feature>
<feature type="glycosylation site" description="N-linked (GlcNAc...) asparagine" evidence="3">
    <location>
        <position position="116"/>
    </location>
</feature>
<feature type="glycosylation site" description="N-linked (GlcNAc...) asparagine" evidence="3">
    <location>
        <position position="141"/>
    </location>
</feature>
<feature type="glycosylation site" description="N-linked (GlcNAc...) asparagine" evidence="3">
    <location>
        <position position="442"/>
    </location>
</feature>
<proteinExistence type="inferred from homology"/>
<organism>
    <name type="scientific">Kluyveromyces lactis (strain ATCC 8585 / CBS 2359 / DSM 70799 / NBRC 1267 / NRRL Y-1140 / WM37)</name>
    <name type="common">Yeast</name>
    <name type="synonym">Candida sphaerica</name>
    <dbReference type="NCBI Taxonomy" id="284590"/>
    <lineage>
        <taxon>Eukaryota</taxon>
        <taxon>Fungi</taxon>
        <taxon>Dikarya</taxon>
        <taxon>Ascomycota</taxon>
        <taxon>Saccharomycotina</taxon>
        <taxon>Saccharomycetes</taxon>
        <taxon>Saccharomycetales</taxon>
        <taxon>Saccharomycetaceae</taxon>
        <taxon>Kluyveromyces</taxon>
    </lineage>
</organism>
<gene>
    <name evidence="5" type="primary">PUL2</name>
    <name type="ordered locus">KLLA0_C19206g</name>
</gene>
<keyword id="KW-0325">Glycoprotein</keyword>
<keyword id="KW-0349">Heme</keyword>
<keyword id="KW-0408">Iron</keyword>
<keyword id="KW-0472">Membrane</keyword>
<keyword id="KW-0479">Metal-binding</keyword>
<keyword id="KW-0503">Monooxygenase</keyword>
<keyword id="KW-0560">Oxidoreductase</keyword>
<keyword id="KW-1185">Reference proteome</keyword>
<keyword id="KW-0812">Transmembrane</keyword>
<keyword id="KW-1133">Transmembrane helix</keyword>
<accession>Q6CSN2</accession>
<name>PUL2_KLULA</name>
<sequence>MLADILIPLIKKNWMAFVYFTPVLFVVLYLLKEWRAAYGFNNLGQTVAAPFGYERKTLPYNKENCARTKFLDGKSLSIKNRDQCGDLYLQRSGTYKEIVLTTPKQLMEYYKSNSKNHSKLDSFGAGAFLVALLGECLGFQNGSEWLSMRKVFDSFFTHKAAVENFPVMIDYISEWIKDLDTEQISDIDPLQLVSDLPFTCIAKYLYGSELCSKQFLQALKDLIPMHTELMHYSFLTVAGRFKIFQYFPSKKMKQVSQFQRQFIDLSLKQVELSRQSGQETVVEKLYRHVESGKFTFNNWIQTIDEILFANIEVTSTVMAWALVEMGSNIEEQNRLRCEILKVKEQSSKDDFNKETDPMQRYMKLTDTYLQYCVWETLRMHPLLWFSFPEISSETLFIDGIRISPNTPIVVDQYQINYNSPIWNPSDKPKDFGKKFAPSRFENITLRDALYSQVTFGAGSRKCLGRNFAELLIKSELAYILSKYKVTLTEKVEFSKDTFVVQPKTKIQLTAL</sequence>
<protein>
    <recommendedName>
        <fullName evidence="5">Cytochrome P450 monooxygenase PUL2</fullName>
        <ecNumber evidence="7">1.-.-.-</ecNumber>
    </recommendedName>
    <alternativeName>
        <fullName evidence="5">Pulcherrimin biosynthesis cluster protein 2</fullName>
    </alternativeName>
</protein>
<reference key="1">
    <citation type="journal article" date="2004" name="Nature">
        <title>Genome evolution in yeasts.</title>
        <authorList>
            <person name="Dujon B."/>
            <person name="Sherman D."/>
            <person name="Fischer G."/>
            <person name="Durrens P."/>
            <person name="Casaregola S."/>
            <person name="Lafontaine I."/>
            <person name="de Montigny J."/>
            <person name="Marck C."/>
            <person name="Neuveglise C."/>
            <person name="Talla E."/>
            <person name="Goffard N."/>
            <person name="Frangeul L."/>
            <person name="Aigle M."/>
            <person name="Anthouard V."/>
            <person name="Babour A."/>
            <person name="Barbe V."/>
            <person name="Barnay S."/>
            <person name="Blanchin S."/>
            <person name="Beckerich J.-M."/>
            <person name="Beyne E."/>
            <person name="Bleykasten C."/>
            <person name="Boisrame A."/>
            <person name="Boyer J."/>
            <person name="Cattolico L."/>
            <person name="Confanioleri F."/>
            <person name="de Daruvar A."/>
            <person name="Despons L."/>
            <person name="Fabre E."/>
            <person name="Fairhead C."/>
            <person name="Ferry-Dumazet H."/>
            <person name="Groppi A."/>
            <person name="Hantraye F."/>
            <person name="Hennequin C."/>
            <person name="Jauniaux N."/>
            <person name="Joyet P."/>
            <person name="Kachouri R."/>
            <person name="Kerrest A."/>
            <person name="Koszul R."/>
            <person name="Lemaire M."/>
            <person name="Lesur I."/>
            <person name="Ma L."/>
            <person name="Muller H."/>
            <person name="Nicaud J.-M."/>
            <person name="Nikolski M."/>
            <person name="Oztas S."/>
            <person name="Ozier-Kalogeropoulos O."/>
            <person name="Pellenz S."/>
            <person name="Potier S."/>
            <person name="Richard G.-F."/>
            <person name="Straub M.-L."/>
            <person name="Suleau A."/>
            <person name="Swennen D."/>
            <person name="Tekaia F."/>
            <person name="Wesolowski-Louvel M."/>
            <person name="Westhof E."/>
            <person name="Wirth B."/>
            <person name="Zeniou-Meyer M."/>
            <person name="Zivanovic Y."/>
            <person name="Bolotin-Fukuhara M."/>
            <person name="Thierry A."/>
            <person name="Bouchier C."/>
            <person name="Caudron B."/>
            <person name="Scarpelli C."/>
            <person name="Gaillardin C."/>
            <person name="Weissenbach J."/>
            <person name="Wincker P."/>
            <person name="Souciet J.-L."/>
        </authorList>
    </citation>
    <scope>NUCLEOTIDE SEQUENCE [LARGE SCALE GENOMIC DNA]</scope>
    <source>
        <strain>ATCC 8585 / CBS 2359 / DSM 70799 / NBRC 1267 / NRRL Y-1140 / WM37</strain>
    </source>
</reference>
<reference key="2">
    <citation type="journal article" date="2018" name="Proc. Natl. Acad. Sci. U.S.A.">
        <title>Functional and evolutionary characterization of a secondary metabolite gene cluster in budding yeasts.</title>
        <authorList>
            <person name="Krause D.J."/>
            <person name="Kominek J."/>
            <person name="Opulente D.A."/>
            <person name="Shen X.X."/>
            <person name="Zhou X."/>
            <person name="Langdon Q.K."/>
            <person name="DeVirgilio J."/>
            <person name="Hulfachor A.B."/>
            <person name="Kurtzman C.P."/>
            <person name="Rokas A."/>
            <person name="Hittinger C.T."/>
        </authorList>
    </citation>
    <scope>IDENTIFICATION</scope>
    <scope>DISRUPTION PHENOTYPE</scope>
    <scope>FUNCTION</scope>
    <scope>PATHWAY</scope>
</reference>